<dbReference type="EC" id="6.1.1.21" evidence="1"/>
<dbReference type="EMBL" id="CP001138">
    <property type="protein sequence ID" value="ACH52896.1"/>
    <property type="molecule type" value="Genomic_DNA"/>
</dbReference>
<dbReference type="RefSeq" id="WP_001107139.1">
    <property type="nucleotide sequence ID" value="NC_011149.1"/>
</dbReference>
<dbReference type="SMR" id="B5F197"/>
<dbReference type="KEGG" id="sea:SeAg_B2673"/>
<dbReference type="HOGENOM" id="CLU_025113_1_1_6"/>
<dbReference type="Proteomes" id="UP000008819">
    <property type="component" value="Chromosome"/>
</dbReference>
<dbReference type="GO" id="GO:0005737">
    <property type="term" value="C:cytoplasm"/>
    <property type="evidence" value="ECO:0007669"/>
    <property type="project" value="UniProtKB-SubCell"/>
</dbReference>
<dbReference type="GO" id="GO:0005524">
    <property type="term" value="F:ATP binding"/>
    <property type="evidence" value="ECO:0007669"/>
    <property type="project" value="UniProtKB-UniRule"/>
</dbReference>
<dbReference type="GO" id="GO:0004821">
    <property type="term" value="F:histidine-tRNA ligase activity"/>
    <property type="evidence" value="ECO:0007669"/>
    <property type="project" value="UniProtKB-UniRule"/>
</dbReference>
<dbReference type="GO" id="GO:0006427">
    <property type="term" value="P:histidyl-tRNA aminoacylation"/>
    <property type="evidence" value="ECO:0007669"/>
    <property type="project" value="UniProtKB-UniRule"/>
</dbReference>
<dbReference type="CDD" id="cd00773">
    <property type="entry name" value="HisRS-like_core"/>
    <property type="match status" value="1"/>
</dbReference>
<dbReference type="CDD" id="cd00859">
    <property type="entry name" value="HisRS_anticodon"/>
    <property type="match status" value="1"/>
</dbReference>
<dbReference type="FunFam" id="3.30.930.10:FF:000005">
    <property type="entry name" value="Histidine--tRNA ligase"/>
    <property type="match status" value="1"/>
</dbReference>
<dbReference type="FunFam" id="3.40.50.800:FF:000007">
    <property type="entry name" value="Histidine--tRNA ligase"/>
    <property type="match status" value="1"/>
</dbReference>
<dbReference type="Gene3D" id="3.40.50.800">
    <property type="entry name" value="Anticodon-binding domain"/>
    <property type="match status" value="1"/>
</dbReference>
<dbReference type="Gene3D" id="3.30.930.10">
    <property type="entry name" value="Bira Bifunctional Protein, Domain 2"/>
    <property type="match status" value="1"/>
</dbReference>
<dbReference type="HAMAP" id="MF_00127">
    <property type="entry name" value="His_tRNA_synth"/>
    <property type="match status" value="1"/>
</dbReference>
<dbReference type="InterPro" id="IPR006195">
    <property type="entry name" value="aa-tRNA-synth_II"/>
</dbReference>
<dbReference type="InterPro" id="IPR045864">
    <property type="entry name" value="aa-tRNA-synth_II/BPL/LPL"/>
</dbReference>
<dbReference type="InterPro" id="IPR004154">
    <property type="entry name" value="Anticodon-bd"/>
</dbReference>
<dbReference type="InterPro" id="IPR036621">
    <property type="entry name" value="Anticodon-bd_dom_sf"/>
</dbReference>
<dbReference type="InterPro" id="IPR015807">
    <property type="entry name" value="His-tRNA-ligase"/>
</dbReference>
<dbReference type="InterPro" id="IPR041715">
    <property type="entry name" value="HisRS-like_core"/>
</dbReference>
<dbReference type="InterPro" id="IPR004516">
    <property type="entry name" value="HisRS/HisZ"/>
</dbReference>
<dbReference type="InterPro" id="IPR033656">
    <property type="entry name" value="HisRS_anticodon"/>
</dbReference>
<dbReference type="NCBIfam" id="TIGR00442">
    <property type="entry name" value="hisS"/>
    <property type="match status" value="1"/>
</dbReference>
<dbReference type="PANTHER" id="PTHR43707:SF1">
    <property type="entry name" value="HISTIDINE--TRNA LIGASE, MITOCHONDRIAL-RELATED"/>
    <property type="match status" value="1"/>
</dbReference>
<dbReference type="PANTHER" id="PTHR43707">
    <property type="entry name" value="HISTIDYL-TRNA SYNTHETASE"/>
    <property type="match status" value="1"/>
</dbReference>
<dbReference type="Pfam" id="PF03129">
    <property type="entry name" value="HGTP_anticodon"/>
    <property type="match status" value="1"/>
</dbReference>
<dbReference type="Pfam" id="PF13393">
    <property type="entry name" value="tRNA-synt_His"/>
    <property type="match status" value="1"/>
</dbReference>
<dbReference type="PIRSF" id="PIRSF001549">
    <property type="entry name" value="His-tRNA_synth"/>
    <property type="match status" value="1"/>
</dbReference>
<dbReference type="SUPFAM" id="SSF52954">
    <property type="entry name" value="Class II aaRS ABD-related"/>
    <property type="match status" value="1"/>
</dbReference>
<dbReference type="SUPFAM" id="SSF55681">
    <property type="entry name" value="Class II aaRS and biotin synthetases"/>
    <property type="match status" value="1"/>
</dbReference>
<dbReference type="PROSITE" id="PS50862">
    <property type="entry name" value="AA_TRNA_LIGASE_II"/>
    <property type="match status" value="1"/>
</dbReference>
<keyword id="KW-0030">Aminoacyl-tRNA synthetase</keyword>
<keyword id="KW-0067">ATP-binding</keyword>
<keyword id="KW-0963">Cytoplasm</keyword>
<keyword id="KW-0436">Ligase</keyword>
<keyword id="KW-0547">Nucleotide-binding</keyword>
<keyword id="KW-0648">Protein biosynthesis</keyword>
<accession>B5F197</accession>
<comment type="catalytic activity">
    <reaction evidence="1">
        <text>tRNA(His) + L-histidine + ATP = L-histidyl-tRNA(His) + AMP + diphosphate + H(+)</text>
        <dbReference type="Rhea" id="RHEA:17313"/>
        <dbReference type="Rhea" id="RHEA-COMP:9665"/>
        <dbReference type="Rhea" id="RHEA-COMP:9689"/>
        <dbReference type="ChEBI" id="CHEBI:15378"/>
        <dbReference type="ChEBI" id="CHEBI:30616"/>
        <dbReference type="ChEBI" id="CHEBI:33019"/>
        <dbReference type="ChEBI" id="CHEBI:57595"/>
        <dbReference type="ChEBI" id="CHEBI:78442"/>
        <dbReference type="ChEBI" id="CHEBI:78527"/>
        <dbReference type="ChEBI" id="CHEBI:456215"/>
        <dbReference type="EC" id="6.1.1.21"/>
    </reaction>
</comment>
<comment type="subunit">
    <text evidence="1">Homodimer.</text>
</comment>
<comment type="subcellular location">
    <subcellularLocation>
        <location evidence="1">Cytoplasm</location>
    </subcellularLocation>
</comment>
<comment type="similarity">
    <text evidence="1">Belongs to the class-II aminoacyl-tRNA synthetase family.</text>
</comment>
<reference key="1">
    <citation type="journal article" date="2011" name="J. Bacteriol.">
        <title>Comparative genomics of 28 Salmonella enterica isolates: evidence for CRISPR-mediated adaptive sublineage evolution.</title>
        <authorList>
            <person name="Fricke W.F."/>
            <person name="Mammel M.K."/>
            <person name="McDermott P.F."/>
            <person name="Tartera C."/>
            <person name="White D.G."/>
            <person name="Leclerc J.E."/>
            <person name="Ravel J."/>
            <person name="Cebula T.A."/>
        </authorList>
    </citation>
    <scope>NUCLEOTIDE SEQUENCE [LARGE SCALE GENOMIC DNA]</scope>
    <source>
        <strain>SL483</strain>
    </source>
</reference>
<feature type="chain" id="PRO_1000095584" description="Histidine--tRNA ligase">
    <location>
        <begin position="1"/>
        <end position="424"/>
    </location>
</feature>
<protein>
    <recommendedName>
        <fullName evidence="1">Histidine--tRNA ligase</fullName>
        <ecNumber evidence="1">6.1.1.21</ecNumber>
    </recommendedName>
    <alternativeName>
        <fullName evidence="1">Histidyl-tRNA synthetase</fullName>
        <shortName evidence="1">HisRS</shortName>
    </alternativeName>
</protein>
<gene>
    <name evidence="1" type="primary">hisS</name>
    <name type="ordered locus">SeAg_B2673</name>
</gene>
<name>SYH_SALA4</name>
<sequence>MAKNIQAIRGMNDYLPGETAIWQRIEGTLKNVLGSYGYSEIRLPIVEQTPLFKRAIGEVTDVVEKEMYTFEDRNGDSLTLRPEGTAGCVRAGIEHGLLYNQEQRLWYIGPMFRHERPQKGRYRQFHQLGAEVFGLQGPDIDAELIMLTARWWRALGIADHVSLELNSIGSLEARANYRDALVAFLEQHQETLDEDCKRRMYTNPLRVLDSKNPDVQALLNDAPALGDYLDDDSREHFAGLCKLLDAAGIAYTVNQRLVRGLDYYNRTVFEWVTNSLGSQGTVCAGGRYDGLVEQLGGRATPAVGFAMGLERLVLLVQAVNPEFIASPVVDIYLVAAGAQTQSAAMTLAERLRDEMPGVKLMTNHGGGNFKKQFARADKWGARIALVLGESEVADGTVVVKDLRSGEQTAVAQDSVAAHLRTLLG</sequence>
<proteinExistence type="inferred from homology"/>
<evidence type="ECO:0000255" key="1">
    <source>
        <dbReference type="HAMAP-Rule" id="MF_00127"/>
    </source>
</evidence>
<organism>
    <name type="scientific">Salmonella agona (strain SL483)</name>
    <dbReference type="NCBI Taxonomy" id="454166"/>
    <lineage>
        <taxon>Bacteria</taxon>
        <taxon>Pseudomonadati</taxon>
        <taxon>Pseudomonadota</taxon>
        <taxon>Gammaproteobacteria</taxon>
        <taxon>Enterobacterales</taxon>
        <taxon>Enterobacteriaceae</taxon>
        <taxon>Salmonella</taxon>
    </lineage>
</organism>